<reference key="1">
    <citation type="journal article" date="2005" name="Science">
        <title>The genome of the basidiomycetous yeast and human pathogen Cryptococcus neoformans.</title>
        <authorList>
            <person name="Loftus B.J."/>
            <person name="Fung E."/>
            <person name="Roncaglia P."/>
            <person name="Rowley D."/>
            <person name="Amedeo P."/>
            <person name="Bruno D."/>
            <person name="Vamathevan J."/>
            <person name="Miranda M."/>
            <person name="Anderson I.J."/>
            <person name="Fraser J.A."/>
            <person name="Allen J.E."/>
            <person name="Bosdet I.E."/>
            <person name="Brent M.R."/>
            <person name="Chiu R."/>
            <person name="Doering T.L."/>
            <person name="Donlin M.J."/>
            <person name="D'Souza C.A."/>
            <person name="Fox D.S."/>
            <person name="Grinberg V."/>
            <person name="Fu J."/>
            <person name="Fukushima M."/>
            <person name="Haas B.J."/>
            <person name="Huang J.C."/>
            <person name="Janbon G."/>
            <person name="Jones S.J.M."/>
            <person name="Koo H.L."/>
            <person name="Krzywinski M.I."/>
            <person name="Kwon-Chung K.J."/>
            <person name="Lengeler K.B."/>
            <person name="Maiti R."/>
            <person name="Marra M.A."/>
            <person name="Marra R.E."/>
            <person name="Mathewson C.A."/>
            <person name="Mitchell T.G."/>
            <person name="Pertea M."/>
            <person name="Riggs F.R."/>
            <person name="Salzberg S.L."/>
            <person name="Schein J.E."/>
            <person name="Shvartsbeyn A."/>
            <person name="Shin H."/>
            <person name="Shumway M."/>
            <person name="Specht C.A."/>
            <person name="Suh B.B."/>
            <person name="Tenney A."/>
            <person name="Utterback T.R."/>
            <person name="Wickes B.L."/>
            <person name="Wortman J.R."/>
            <person name="Wye N.H."/>
            <person name="Kronstad J.W."/>
            <person name="Lodge J.K."/>
            <person name="Heitman J."/>
            <person name="Davis R.W."/>
            <person name="Fraser C.M."/>
            <person name="Hyman R.W."/>
        </authorList>
    </citation>
    <scope>NUCLEOTIDE SEQUENCE [LARGE SCALE GENOMIC DNA]</scope>
    <source>
        <strain>B-3501A</strain>
    </source>
</reference>
<protein>
    <recommendedName>
        <fullName>tRNA (adenine(58)-N(1))-methyltransferase non-catalytic subunit TRM6</fullName>
    </recommendedName>
    <alternativeName>
        <fullName>tRNA(m1A58)-methyltransferase subunit TRM6</fullName>
        <shortName>tRNA(m1A58)MTase subunit TRM6</shortName>
    </alternativeName>
</protein>
<comment type="function">
    <text evidence="1">Substrate-binding subunit of tRNA (adenine-N(1)-)-methyltransferase, which catalyzes the formation of N(1)-methyladenine at position 58 (m1A58) in initiator methionyl-tRNA.</text>
</comment>
<comment type="subunit">
    <text evidence="1">Heterotetramer; composed of two copies of TRM6 and two copies of TRM61.</text>
</comment>
<comment type="subcellular location">
    <subcellularLocation>
        <location evidence="1">Nucleus</location>
    </subcellularLocation>
</comment>
<comment type="similarity">
    <text evidence="3">Belongs to the TRM6/GCD10 family.</text>
</comment>
<gene>
    <name type="primary">TRM6</name>
    <name type="ordered locus">CNBC5380</name>
</gene>
<organism>
    <name type="scientific">Cryptococcus neoformans var. neoformans serotype D (strain B-3501A)</name>
    <name type="common">Filobasidiella neoformans</name>
    <dbReference type="NCBI Taxonomy" id="283643"/>
    <lineage>
        <taxon>Eukaryota</taxon>
        <taxon>Fungi</taxon>
        <taxon>Dikarya</taxon>
        <taxon>Basidiomycota</taxon>
        <taxon>Agaricomycotina</taxon>
        <taxon>Tremellomycetes</taxon>
        <taxon>Tremellales</taxon>
        <taxon>Cryptococcaceae</taxon>
        <taxon>Cryptococcus</taxon>
        <taxon>Cryptococcus neoformans species complex</taxon>
    </lineage>
</organism>
<accession>P0CS07</accession>
<accession>Q55VE7</accession>
<accession>Q5KKT9</accession>
<sequence length="560" mass="62193">MTEKQQNSQQPSQLDSTASISALPPQLQQPAAGITGAPGNAEATTSEPPSTKRPRKAIESSEPLTEVILRRLTTIKEGDTVLLRLPSDLVKSVVVQGDNLVQLGKYGAFPASQLIGLHYDITYEIVSSSGSGASTPQPQSLDFSTEETQSKKGNKKNKNKGKDTAAVSKNNPGWNNILRPLKRQLVVDAVIDDIVETNEFIEDLSETEKTTLSHDEIAELRAQGCTPEEIIQAQIARHEKFGLKTDFSKEKWRRRKEKKFYQTVQPLAPSIPNVLYHYNLRSPQSILHLRDDTLSQLLTMANVRPGGRYLVVDDTGGLITAAVLERMGSEGSILLFNESDSPPAWGILQTMNFSDRELEPIKWLNWLEAEEEYQKPAPPVQAEPPTNPIKAAAKQRKYAAQVAELNNTRNELHLGGWDGLILATTLNPISVVARLTPYLLGSAPIVVYSPYYQVLAELLSWSKKDPNYLNDTLTESWERTYQVLPGRTHPMMTTSATGGYLWNATRVHPSQFQPESHQRFKRRKTGKAPGKEQLSSVAKDEEAVNESLEIDPEELANEGE</sequence>
<evidence type="ECO:0000250" key="1">
    <source>
        <dbReference type="UniProtKB" id="P41814"/>
    </source>
</evidence>
<evidence type="ECO:0000256" key="2">
    <source>
        <dbReference type="SAM" id="MobiDB-lite"/>
    </source>
</evidence>
<evidence type="ECO:0000305" key="3"/>
<name>TRM6_CRYNB</name>
<proteinExistence type="inferred from homology"/>
<dbReference type="EMBL" id="AAEY01000015">
    <property type="protein sequence ID" value="EAL21837.1"/>
    <property type="molecule type" value="Genomic_DNA"/>
</dbReference>
<dbReference type="RefSeq" id="XP_776484.1">
    <property type="nucleotide sequence ID" value="XM_771391.1"/>
</dbReference>
<dbReference type="SMR" id="P0CS07"/>
<dbReference type="EnsemblFungi" id="AAW42248">
    <property type="protein sequence ID" value="AAW42248"/>
    <property type="gene ID" value="CNC01870"/>
</dbReference>
<dbReference type="GeneID" id="4935203"/>
<dbReference type="KEGG" id="cnb:CNBC5380"/>
<dbReference type="VEuPathDB" id="FungiDB:CNBC5380"/>
<dbReference type="HOGENOM" id="CLU_010916_1_0_1"/>
<dbReference type="OrthoDB" id="6651at5206"/>
<dbReference type="GO" id="GO:0005634">
    <property type="term" value="C:nucleus"/>
    <property type="evidence" value="ECO:0007669"/>
    <property type="project" value="UniProtKB-SubCell"/>
</dbReference>
<dbReference type="GO" id="GO:0031515">
    <property type="term" value="C:tRNA (m1A) methyltransferase complex"/>
    <property type="evidence" value="ECO:0007669"/>
    <property type="project" value="InterPro"/>
</dbReference>
<dbReference type="GO" id="GO:0003723">
    <property type="term" value="F:RNA binding"/>
    <property type="evidence" value="ECO:0007669"/>
    <property type="project" value="UniProtKB-KW"/>
</dbReference>
<dbReference type="GO" id="GO:0030488">
    <property type="term" value="P:tRNA methylation"/>
    <property type="evidence" value="ECO:0007669"/>
    <property type="project" value="InterPro"/>
</dbReference>
<dbReference type="Gene3D" id="3.10.330.20">
    <property type="match status" value="1"/>
</dbReference>
<dbReference type="InterPro" id="IPR017423">
    <property type="entry name" value="TRM6"/>
</dbReference>
<dbReference type="PANTHER" id="PTHR12945">
    <property type="entry name" value="TRANSLATION INITIATION FACTOR EIF3-RELATED"/>
    <property type="match status" value="1"/>
</dbReference>
<dbReference type="PANTHER" id="PTHR12945:SF0">
    <property type="entry name" value="TRNA (ADENINE(58)-N(1))-METHYLTRANSFERASE NON-CATALYTIC SUBUNIT TRM6"/>
    <property type="match status" value="1"/>
</dbReference>
<dbReference type="Pfam" id="PF04189">
    <property type="entry name" value="Gcd10p"/>
    <property type="match status" value="1"/>
</dbReference>
<keyword id="KW-0539">Nucleus</keyword>
<keyword id="KW-0694">RNA-binding</keyword>
<keyword id="KW-0819">tRNA processing</keyword>
<feature type="chain" id="PRO_0000410315" description="tRNA (adenine(58)-N(1))-methyltransferase non-catalytic subunit TRM6">
    <location>
        <begin position="1"/>
        <end position="560"/>
    </location>
</feature>
<feature type="region of interest" description="Disordered" evidence="2">
    <location>
        <begin position="1"/>
        <end position="61"/>
    </location>
</feature>
<feature type="region of interest" description="Disordered" evidence="2">
    <location>
        <begin position="128"/>
        <end position="171"/>
    </location>
</feature>
<feature type="region of interest" description="Disordered" evidence="2">
    <location>
        <begin position="510"/>
        <end position="560"/>
    </location>
</feature>
<feature type="compositionally biased region" description="Polar residues" evidence="2">
    <location>
        <begin position="1"/>
        <end position="20"/>
    </location>
</feature>
<feature type="compositionally biased region" description="Polar residues" evidence="2">
    <location>
        <begin position="128"/>
        <end position="147"/>
    </location>
</feature>
<feature type="compositionally biased region" description="Acidic residues" evidence="2">
    <location>
        <begin position="548"/>
        <end position="560"/>
    </location>
</feature>